<name>RS8_PSELT</name>
<reference key="1">
    <citation type="submission" date="2007-08" db="EMBL/GenBank/DDBJ databases">
        <title>Complete sequence of Thermotoga lettingae TMO.</title>
        <authorList>
            <consortium name="US DOE Joint Genome Institute"/>
            <person name="Copeland A."/>
            <person name="Lucas S."/>
            <person name="Lapidus A."/>
            <person name="Barry K."/>
            <person name="Glavina del Rio T."/>
            <person name="Dalin E."/>
            <person name="Tice H."/>
            <person name="Pitluck S."/>
            <person name="Foster B."/>
            <person name="Bruce D."/>
            <person name="Schmutz J."/>
            <person name="Larimer F."/>
            <person name="Land M."/>
            <person name="Hauser L."/>
            <person name="Kyrpides N."/>
            <person name="Mikhailova N."/>
            <person name="Nelson K."/>
            <person name="Gogarten J.P."/>
            <person name="Noll K."/>
            <person name="Richardson P."/>
        </authorList>
    </citation>
    <scope>NUCLEOTIDE SEQUENCE [LARGE SCALE GENOMIC DNA]</scope>
    <source>
        <strain>ATCC BAA-301 / DSM 14385 / NBRC 107922 / TMO</strain>
    </source>
</reference>
<gene>
    <name evidence="1" type="primary">rpsH</name>
    <name type="ordered locus">Tlet_0593</name>
</gene>
<keyword id="KW-1185">Reference proteome</keyword>
<keyword id="KW-0687">Ribonucleoprotein</keyword>
<keyword id="KW-0689">Ribosomal protein</keyword>
<keyword id="KW-0694">RNA-binding</keyword>
<keyword id="KW-0699">rRNA-binding</keyword>
<protein>
    <recommendedName>
        <fullName evidence="1">Small ribosomal subunit protein uS8</fullName>
    </recommendedName>
    <alternativeName>
        <fullName evidence="2">30S ribosomal protein S8</fullName>
    </alternativeName>
</protein>
<feature type="chain" id="PRO_1000067492" description="Small ribosomal subunit protein uS8">
    <location>
        <begin position="1"/>
        <end position="134"/>
    </location>
</feature>
<proteinExistence type="inferred from homology"/>
<sequence length="134" mass="15257">MWSDPIADMLTRIRNANVVFKEYVDVPASNIKKAICEILKKEGFIHDYKYIEDGKQGILRIHMKYKGQRRDRERVIKGIVRVSKPGRRLYVSKDEIPKVKNGIGVAILTTSKGVVTDKEARVLGVGGEVIAYIW</sequence>
<organism>
    <name type="scientific">Pseudothermotoga lettingae (strain ATCC BAA-301 / DSM 14385 / NBRC 107922 / TMO)</name>
    <name type="common">Thermotoga lettingae</name>
    <dbReference type="NCBI Taxonomy" id="416591"/>
    <lineage>
        <taxon>Bacteria</taxon>
        <taxon>Thermotogati</taxon>
        <taxon>Thermotogota</taxon>
        <taxon>Thermotogae</taxon>
        <taxon>Thermotogales</taxon>
        <taxon>Thermotogaceae</taxon>
        <taxon>Pseudothermotoga</taxon>
    </lineage>
</organism>
<dbReference type="EMBL" id="CP000812">
    <property type="protein sequence ID" value="ABV33159.1"/>
    <property type="molecule type" value="Genomic_DNA"/>
</dbReference>
<dbReference type="SMR" id="A8F4S5"/>
<dbReference type="STRING" id="416591.Tlet_0593"/>
<dbReference type="KEGG" id="tle:Tlet_0593"/>
<dbReference type="eggNOG" id="COG0096">
    <property type="taxonomic scope" value="Bacteria"/>
</dbReference>
<dbReference type="HOGENOM" id="CLU_098428_0_2_0"/>
<dbReference type="OrthoDB" id="9802617at2"/>
<dbReference type="Proteomes" id="UP000002016">
    <property type="component" value="Chromosome"/>
</dbReference>
<dbReference type="GO" id="GO:1990904">
    <property type="term" value="C:ribonucleoprotein complex"/>
    <property type="evidence" value="ECO:0007669"/>
    <property type="project" value="UniProtKB-KW"/>
</dbReference>
<dbReference type="GO" id="GO:0005840">
    <property type="term" value="C:ribosome"/>
    <property type="evidence" value="ECO:0007669"/>
    <property type="project" value="UniProtKB-KW"/>
</dbReference>
<dbReference type="GO" id="GO:0019843">
    <property type="term" value="F:rRNA binding"/>
    <property type="evidence" value="ECO:0007669"/>
    <property type="project" value="UniProtKB-UniRule"/>
</dbReference>
<dbReference type="GO" id="GO:0003735">
    <property type="term" value="F:structural constituent of ribosome"/>
    <property type="evidence" value="ECO:0007669"/>
    <property type="project" value="InterPro"/>
</dbReference>
<dbReference type="GO" id="GO:0006412">
    <property type="term" value="P:translation"/>
    <property type="evidence" value="ECO:0007669"/>
    <property type="project" value="UniProtKB-UniRule"/>
</dbReference>
<dbReference type="FunFam" id="3.30.1370.30:FF:000002">
    <property type="entry name" value="30S ribosomal protein S8"/>
    <property type="match status" value="1"/>
</dbReference>
<dbReference type="FunFam" id="3.30.1490.10:FF:000001">
    <property type="entry name" value="30S ribosomal protein S8"/>
    <property type="match status" value="1"/>
</dbReference>
<dbReference type="Gene3D" id="3.30.1370.30">
    <property type="match status" value="1"/>
</dbReference>
<dbReference type="Gene3D" id="3.30.1490.10">
    <property type="match status" value="1"/>
</dbReference>
<dbReference type="HAMAP" id="MF_01302_B">
    <property type="entry name" value="Ribosomal_uS8_B"/>
    <property type="match status" value="1"/>
</dbReference>
<dbReference type="InterPro" id="IPR000630">
    <property type="entry name" value="Ribosomal_uS8"/>
</dbReference>
<dbReference type="InterPro" id="IPR047863">
    <property type="entry name" value="Ribosomal_uS8_CS"/>
</dbReference>
<dbReference type="InterPro" id="IPR035987">
    <property type="entry name" value="Ribosomal_uS8_sf"/>
</dbReference>
<dbReference type="NCBIfam" id="NF001109">
    <property type="entry name" value="PRK00136.1"/>
    <property type="match status" value="1"/>
</dbReference>
<dbReference type="PANTHER" id="PTHR11758">
    <property type="entry name" value="40S RIBOSOMAL PROTEIN S15A"/>
    <property type="match status" value="1"/>
</dbReference>
<dbReference type="Pfam" id="PF00410">
    <property type="entry name" value="Ribosomal_S8"/>
    <property type="match status" value="1"/>
</dbReference>
<dbReference type="SUPFAM" id="SSF56047">
    <property type="entry name" value="Ribosomal protein S8"/>
    <property type="match status" value="1"/>
</dbReference>
<dbReference type="PROSITE" id="PS00053">
    <property type="entry name" value="RIBOSOMAL_S8"/>
    <property type="match status" value="1"/>
</dbReference>
<evidence type="ECO:0000255" key="1">
    <source>
        <dbReference type="HAMAP-Rule" id="MF_01302"/>
    </source>
</evidence>
<evidence type="ECO:0000305" key="2"/>
<comment type="function">
    <text evidence="1">One of the primary rRNA binding proteins, it binds directly to 16S rRNA central domain where it helps coordinate assembly of the platform of the 30S subunit.</text>
</comment>
<comment type="subunit">
    <text evidence="1">Part of the 30S ribosomal subunit. Contacts proteins S5 and S12.</text>
</comment>
<comment type="similarity">
    <text evidence="1">Belongs to the universal ribosomal protein uS8 family.</text>
</comment>
<accession>A8F4S5</accession>